<accession>P0A6J4</accession>
<accession>P12610</accession>
<accession>P76533</accession>
<accession>P76961</accession>
<accession>P76962</accession>
<evidence type="ECO:0000255" key="1">
    <source>
        <dbReference type="HAMAP-Rule" id="MF_00468"/>
    </source>
</evidence>
<gene>
    <name evidence="1" type="primary">cysZ</name>
    <name type="ordered locus">Z3679</name>
    <name type="ordered locus">ECs3285</name>
</gene>
<organism>
    <name type="scientific">Escherichia coli O157:H7</name>
    <dbReference type="NCBI Taxonomy" id="83334"/>
    <lineage>
        <taxon>Bacteria</taxon>
        <taxon>Pseudomonadati</taxon>
        <taxon>Pseudomonadota</taxon>
        <taxon>Gammaproteobacteria</taxon>
        <taxon>Enterobacterales</taxon>
        <taxon>Enterobacteriaceae</taxon>
        <taxon>Escherichia</taxon>
    </lineage>
</organism>
<reference key="1">
    <citation type="journal article" date="2001" name="Nature">
        <title>Genome sequence of enterohaemorrhagic Escherichia coli O157:H7.</title>
        <authorList>
            <person name="Perna N.T."/>
            <person name="Plunkett G. III"/>
            <person name="Burland V."/>
            <person name="Mau B."/>
            <person name="Glasner J.D."/>
            <person name="Rose D.J."/>
            <person name="Mayhew G.F."/>
            <person name="Evans P.S."/>
            <person name="Gregor J."/>
            <person name="Kirkpatrick H.A."/>
            <person name="Posfai G."/>
            <person name="Hackett J."/>
            <person name="Klink S."/>
            <person name="Boutin A."/>
            <person name="Shao Y."/>
            <person name="Miller L."/>
            <person name="Grotbeck E.J."/>
            <person name="Davis N.W."/>
            <person name="Lim A."/>
            <person name="Dimalanta E.T."/>
            <person name="Potamousis K."/>
            <person name="Apodaca J."/>
            <person name="Anantharaman T.S."/>
            <person name="Lin J."/>
            <person name="Yen G."/>
            <person name="Schwartz D.C."/>
            <person name="Welch R.A."/>
            <person name="Blattner F.R."/>
        </authorList>
    </citation>
    <scope>NUCLEOTIDE SEQUENCE [LARGE SCALE GENOMIC DNA]</scope>
    <source>
        <strain>O157:H7 / EDL933 / ATCC 700927 / EHEC</strain>
    </source>
</reference>
<reference key="2">
    <citation type="journal article" date="2001" name="DNA Res.">
        <title>Complete genome sequence of enterohemorrhagic Escherichia coli O157:H7 and genomic comparison with a laboratory strain K-12.</title>
        <authorList>
            <person name="Hayashi T."/>
            <person name="Makino K."/>
            <person name="Ohnishi M."/>
            <person name="Kurokawa K."/>
            <person name="Ishii K."/>
            <person name="Yokoyama K."/>
            <person name="Han C.-G."/>
            <person name="Ohtsubo E."/>
            <person name="Nakayama K."/>
            <person name="Murata T."/>
            <person name="Tanaka M."/>
            <person name="Tobe T."/>
            <person name="Iida T."/>
            <person name="Takami H."/>
            <person name="Honda T."/>
            <person name="Sasakawa C."/>
            <person name="Ogasawara N."/>
            <person name="Yasunaga T."/>
            <person name="Kuhara S."/>
            <person name="Shiba T."/>
            <person name="Hattori M."/>
            <person name="Shinagawa H."/>
        </authorList>
    </citation>
    <scope>NUCLEOTIDE SEQUENCE [LARGE SCALE GENOMIC DNA]</scope>
    <source>
        <strain>O157:H7 / Sakai / RIMD 0509952 / EHEC</strain>
    </source>
</reference>
<feature type="chain" id="PRO_0000204337" description="Sulfate transporter CysZ">
    <location>
        <begin position="1"/>
        <end position="253"/>
    </location>
</feature>
<feature type="transmembrane region" description="Helical" evidence="1">
    <location>
        <begin position="31"/>
        <end position="51"/>
    </location>
</feature>
<feature type="transmembrane region" description="Helical" evidence="1">
    <location>
        <begin position="75"/>
        <end position="95"/>
    </location>
</feature>
<feature type="transmembrane region" description="Helical" evidence="1">
    <location>
        <begin position="151"/>
        <end position="171"/>
    </location>
</feature>
<feature type="transmembrane region" description="Helical" evidence="1">
    <location>
        <begin position="222"/>
        <end position="242"/>
    </location>
</feature>
<sequence length="253" mass="29305">MVSSFTSAPRSGFYYFAQGWKLVSQPGIRRFVILPLLVNILLMGGAFWWLFTQLDVWIPTLMSYVPDWLQWLSYLLWPLAVISVLLVFGYFFSTIANWIAAPFNGLLAEQLEARLTGATPPDTGIFGIMKDVPRIMKREWQKFAWYLPRAIVLLILYFIPGIGQTVAPVLWFLFSAWMLAIQYCDYPFDNHKVPFKEMRTALRTRKITNMQFGALTSLFTMIPLLNLFIMPVAVCGATAMWVDCYRDKHAMWR</sequence>
<protein>
    <recommendedName>
        <fullName evidence="1">Sulfate transporter CysZ</fullName>
    </recommendedName>
</protein>
<name>CYSZ_ECO57</name>
<dbReference type="EMBL" id="AE005174">
    <property type="protein sequence ID" value="AAG57532.1"/>
    <property type="molecule type" value="Genomic_DNA"/>
</dbReference>
<dbReference type="EMBL" id="BA000007">
    <property type="protein sequence ID" value="BAB36708.1"/>
    <property type="molecule type" value="Genomic_DNA"/>
</dbReference>
<dbReference type="PIR" id="E91039">
    <property type="entry name" value="E91039"/>
</dbReference>
<dbReference type="PIR" id="H85883">
    <property type="entry name" value="H85883"/>
</dbReference>
<dbReference type="RefSeq" id="NP_311312.1">
    <property type="nucleotide sequence ID" value="NC_002695.1"/>
</dbReference>
<dbReference type="RefSeq" id="WP_000254839.1">
    <property type="nucleotide sequence ID" value="NZ_VOAI01000001.1"/>
</dbReference>
<dbReference type="SMR" id="P0A6J4"/>
<dbReference type="STRING" id="155864.Z3679"/>
<dbReference type="GeneID" id="915545"/>
<dbReference type="GeneID" id="93774718"/>
<dbReference type="KEGG" id="ece:Z3679"/>
<dbReference type="KEGG" id="ecs:ECs_3285"/>
<dbReference type="PATRIC" id="fig|386585.9.peg.3432"/>
<dbReference type="eggNOG" id="COG2981">
    <property type="taxonomic scope" value="Bacteria"/>
</dbReference>
<dbReference type="HOGENOM" id="CLU_070331_1_0_6"/>
<dbReference type="OMA" id="PFADDWS"/>
<dbReference type="Proteomes" id="UP000000558">
    <property type="component" value="Chromosome"/>
</dbReference>
<dbReference type="Proteomes" id="UP000002519">
    <property type="component" value="Chromosome"/>
</dbReference>
<dbReference type="GO" id="GO:0005886">
    <property type="term" value="C:plasma membrane"/>
    <property type="evidence" value="ECO:0007669"/>
    <property type="project" value="UniProtKB-SubCell"/>
</dbReference>
<dbReference type="GO" id="GO:0009675">
    <property type="term" value="F:high-affinity sulfate:proton symporter activity"/>
    <property type="evidence" value="ECO:0007669"/>
    <property type="project" value="TreeGrafter"/>
</dbReference>
<dbReference type="GO" id="GO:0019344">
    <property type="term" value="P:cysteine biosynthetic process"/>
    <property type="evidence" value="ECO:0007669"/>
    <property type="project" value="UniProtKB-UniRule"/>
</dbReference>
<dbReference type="GO" id="GO:0000103">
    <property type="term" value="P:sulfate assimilation"/>
    <property type="evidence" value="ECO:0007669"/>
    <property type="project" value="InterPro"/>
</dbReference>
<dbReference type="HAMAP" id="MF_00468">
    <property type="entry name" value="CysZ"/>
    <property type="match status" value="1"/>
</dbReference>
<dbReference type="InterPro" id="IPR050480">
    <property type="entry name" value="CysZ_sulfate_transptr"/>
</dbReference>
<dbReference type="InterPro" id="IPR022985">
    <property type="entry name" value="Sulfate_CysZ"/>
</dbReference>
<dbReference type="NCBIfam" id="NF003433">
    <property type="entry name" value="PRK04949.1"/>
    <property type="match status" value="1"/>
</dbReference>
<dbReference type="PANTHER" id="PTHR37468">
    <property type="entry name" value="SULFATE TRANSPORTER CYSZ"/>
    <property type="match status" value="1"/>
</dbReference>
<dbReference type="PANTHER" id="PTHR37468:SF1">
    <property type="entry name" value="SULFATE TRANSPORTER CYSZ"/>
    <property type="match status" value="1"/>
</dbReference>
<dbReference type="Pfam" id="PF07264">
    <property type="entry name" value="EI24"/>
    <property type="match status" value="1"/>
</dbReference>
<comment type="function">
    <text evidence="1">High affinity, high specificity proton-dependent sulfate transporter, which mediates sulfate uptake. Provides the sulfur source for the cysteine synthesis pathway.</text>
</comment>
<comment type="subcellular location">
    <subcellularLocation>
        <location evidence="1">Cell inner membrane</location>
        <topology evidence="1">Multi-pass membrane protein</topology>
    </subcellularLocation>
</comment>
<comment type="similarity">
    <text evidence="1">Belongs to the CysZ family.</text>
</comment>
<proteinExistence type="inferred from homology"/>
<keyword id="KW-0028">Amino-acid biosynthesis</keyword>
<keyword id="KW-0997">Cell inner membrane</keyword>
<keyword id="KW-1003">Cell membrane</keyword>
<keyword id="KW-0198">Cysteine biosynthesis</keyword>
<keyword id="KW-0472">Membrane</keyword>
<keyword id="KW-1185">Reference proteome</keyword>
<keyword id="KW-0764">Sulfate transport</keyword>
<keyword id="KW-0812">Transmembrane</keyword>
<keyword id="KW-1133">Transmembrane helix</keyword>
<keyword id="KW-0813">Transport</keyword>